<sequence>MMLRTWISLPMVLLDAYCFCIFVSCSISTTTAPVEWKSPDRQIPMNITCANYSGTVNGNVTFRGLQNKTEDFLHWLLGWGHKSICSFFPKLQGNKEQHYMYGITNLTYNCTYDRLTLLNLTTENSGKYYFKREDVNSTFYYSCYNLTVT</sequence>
<accession>Q6SWC6</accession>
<accession>D2K3H4</accession>
<dbReference type="EMBL" id="AY446894">
    <property type="protein sequence ID" value="AAR31570.1"/>
    <property type="molecule type" value="Genomic_DNA"/>
</dbReference>
<dbReference type="RefSeq" id="YP_081464.1">
    <property type="nucleotide sequence ID" value="NC_006273.2"/>
</dbReference>
<dbReference type="GlyCosmos" id="Q6SWC6">
    <property type="glycosylation" value="9 sites, No reported glycans"/>
</dbReference>
<dbReference type="DNASU" id="3077421"/>
<dbReference type="GeneID" id="3077421"/>
<dbReference type="KEGG" id="vg:3077421"/>
<dbReference type="Reactome" id="R-HSA-9609690">
    <property type="pathway name" value="HCMV Early Events"/>
</dbReference>
<dbReference type="Proteomes" id="UP000000938">
    <property type="component" value="Segment"/>
</dbReference>
<dbReference type="GO" id="GO:0016020">
    <property type="term" value="C:membrane"/>
    <property type="evidence" value="ECO:0007669"/>
    <property type="project" value="UniProtKB-KW"/>
</dbReference>
<dbReference type="GO" id="GO:0055036">
    <property type="term" value="C:virion membrane"/>
    <property type="evidence" value="ECO:0007669"/>
    <property type="project" value="UniProtKB-SubCell"/>
</dbReference>
<keyword id="KW-0244">Early protein</keyword>
<keyword id="KW-0325">Glycoprotein</keyword>
<keyword id="KW-0472">Membrane</keyword>
<keyword id="KW-1185">Reference proteome</keyword>
<keyword id="KW-0732">Signal</keyword>
<keyword id="KW-0946">Virion</keyword>
<organism>
    <name type="scientific">Human cytomegalovirus (strain Merlin)</name>
    <name type="common">HHV-5</name>
    <name type="synonym">Human herpesvirus 5</name>
    <dbReference type="NCBI Taxonomy" id="295027"/>
    <lineage>
        <taxon>Viruses</taxon>
        <taxon>Duplodnaviria</taxon>
        <taxon>Heunggongvirae</taxon>
        <taxon>Peploviricota</taxon>
        <taxon>Herviviricetes</taxon>
        <taxon>Herpesvirales</taxon>
        <taxon>Orthoherpesviridae</taxon>
        <taxon>Betaherpesvirinae</taxon>
        <taxon>Cytomegalovirus</taxon>
        <taxon>Cytomegalovirus humanbeta5</taxon>
        <taxon>Human cytomegalovirus</taxon>
    </lineage>
</organism>
<reference key="1">
    <citation type="journal article" date="2004" name="J. Gen. Virol.">
        <title>Genetic content of wild-type human cytomegalovirus.</title>
        <authorList>
            <person name="Dolan A."/>
            <person name="Cunningham C."/>
            <person name="Hector R.D."/>
            <person name="Hassan-Walker A.F."/>
            <person name="Lee L."/>
            <person name="Addison C."/>
            <person name="Dargan D.J."/>
            <person name="McGeoch D.J."/>
            <person name="Gatherer D."/>
            <person name="Emery V.C."/>
            <person name="Griffiths P.D."/>
            <person name="Sinzger C."/>
            <person name="McSharry B.P."/>
            <person name="Wilkinson G.W.G."/>
            <person name="Davison A.J."/>
        </authorList>
    </citation>
    <scope>NUCLEOTIDE SEQUENCE [LARGE SCALE GENOMIC DNA]</scope>
</reference>
<organismHost>
    <name type="scientific">Homo sapiens</name>
    <name type="common">Human</name>
    <dbReference type="NCBI Taxonomy" id="9606"/>
</organismHost>
<evidence type="ECO:0000250" key="1"/>
<evidence type="ECO:0000255" key="2"/>
<evidence type="ECO:0000305" key="3"/>
<gene>
    <name type="primary">UL4</name>
</gene>
<comment type="subcellular location">
    <subcellularLocation>
        <location evidence="1">Virion membrane</location>
        <topology evidence="1">Peripheral membrane protein</topology>
    </subcellularLocation>
</comment>
<comment type="PTM">
    <text evidence="1">N-glycosylated and possibly O-glycosylated.</text>
</comment>
<comment type="similarity">
    <text evidence="3">Belongs to the RL11 family.</text>
</comment>
<proteinExistence type="inferred from homology"/>
<feature type="signal peptide" evidence="2">
    <location>
        <begin position="1"/>
        <end position="18"/>
    </location>
</feature>
<feature type="chain" id="PRO_0000418240" description="Envelope glycoprotein UL4">
    <location>
        <begin position="19"/>
        <end position="149"/>
    </location>
</feature>
<feature type="glycosylation site" description="N-linked (GlcNAc...) asparagine; by host" evidence="2">
    <location>
        <position position="46"/>
    </location>
</feature>
<feature type="glycosylation site" description="N-linked (GlcNAc...) asparagine; by host" evidence="2">
    <location>
        <position position="51"/>
    </location>
</feature>
<feature type="glycosylation site" description="N-linked (GlcNAc...) asparagine; by host" evidence="2">
    <location>
        <position position="59"/>
    </location>
</feature>
<feature type="glycosylation site" description="N-linked (GlcNAc...) asparagine; by host" evidence="2">
    <location>
        <position position="67"/>
    </location>
</feature>
<feature type="glycosylation site" description="N-linked (GlcNAc...) asparagine; by host" evidence="2">
    <location>
        <position position="105"/>
    </location>
</feature>
<feature type="glycosylation site" description="N-linked (GlcNAc...) asparagine; by host" evidence="2">
    <location>
        <position position="109"/>
    </location>
</feature>
<feature type="glycosylation site" description="N-linked (GlcNAc...) asparagine; by host" evidence="2">
    <location>
        <position position="119"/>
    </location>
</feature>
<feature type="glycosylation site" description="N-linked (GlcNAc...) asparagine; by host" evidence="2">
    <location>
        <position position="136"/>
    </location>
</feature>
<feature type="glycosylation site" description="N-linked (GlcNAc...) asparagine; by host" evidence="2">
    <location>
        <position position="145"/>
    </location>
</feature>
<name>UL04_HCMVM</name>
<protein>
    <recommendedName>
        <fullName>Envelope glycoprotein UL4</fullName>
    </recommendedName>
</protein>